<evidence type="ECO:0000255" key="1">
    <source>
        <dbReference type="PROSITE-ProRule" id="PRU00541"/>
    </source>
</evidence>
<evidence type="ECO:0000256" key="2">
    <source>
        <dbReference type="SAM" id="MobiDB-lite"/>
    </source>
</evidence>
<protein>
    <recommendedName>
        <fullName>Putative helicase L115</fullName>
        <ecNumber>3.6.4.-</ecNumber>
    </recommendedName>
</protein>
<gene>
    <name type="ordered locus">MIMI_L115</name>
</gene>
<sequence length="1246" mass="143267">MSKTITKKVNKKTKKSTKINPKKLAKKPIIKSIDKPTNLTDVDFDKLIHTVETSTKRHFIAIEFNKKPVNNIANLGAKVNQKARLERSGEYYGIGVEILETIRPLLTNRLIIKILKLLKQENLTSPLKILDLNSLDELHYVLHCWLENATTVYDDCLNSYDKSYPEYDQWIRTVRSDPLNCKVRLTEIGFNEKTGGSVVPADWIDGEFDSGISLHKEMDKLETRIGKPPATYAIIHSMMIQKQDSIIEDITNTKFDYLFYVDLIDNKLVSKLVSKIRKKPYQYVKYDNTIIGFCLEDILTTKSQNNKKPREVGLYVSRLQKSIRRGRFGSQIMRETIDAINESPNYNLPEHGFMRVSASKQLVWRLFISILEDCRPYVTSGNELSLLDLILLVLITQKCLEYKFTDNLLELIKVTALMAQYNDTKSDLFDWRKFTESIKTPINPKSDYHTAISLALGNVIMMSGDTRMLKKLYSVNLVFKEFKRPKCNSLLELTSSNFKLTDQDTYQDIMLTSIDHHCKPNIILYYQACIPVSLTTREISSYIWKISSSYNIRSGKTQNNIDQVLRLVQNFLLEKSTKVSNEINNTFLNYSCNEIEPDNKTRRTSFLILFGSKYKFGGKDVMLAGTKKNPVKIKTKNEWVYSKDMAVINAYPKKYIYTKYLDPPFGFKWTKPKFWTEIIDGKPYVDGTNVDFFDGSIALKSITPLVTKKCNKYTTSLITTFFSGLDIELESILDVRNKSKPQIVNWVNTIDLNDIDLELVRCTYTKIFNQFNNTIMIGPCDRSGNKMHNSINYKLEGKLWAIFNLLHYLYPKTINPNSALNFSLNRSTQGYIHLIKSLEQLLFVGKNITGLVPTISTKLWDHQQETVNTMVAKFTDGYHGFGDASDVGSGKTLTSLALASKLINTINDIHSGILVLLPGNKLIVTWQDEIDKHTKNFDVKLHKPSGDIGKIKRNTIVISTMGRQRDNPINHKWLLVIIDECLSVQNKNALQTEQAFIQSLLAKYLVMMSATFFRTRFDKLYYMLKMLQTGLPERKQYLETILAESIVAKVPLSGMKWTTNIIHFQLNSLTRELYNKIIDKDLSVEAKYAKLNSLLVNNKEVNNMVVKQLSKLIAELTKQGCKCLIYARSQDEAKLWSNNLKIPIYPKKGDHCIVTYHDGTYGLNDLVIYNTIVMRPPTPDSLPQIKGRLARPGQKNNNLRIEYFVLEDTIEEGLLIRLEIASKFVHQYIMPLAKFYNISVNHQKYK</sequence>
<proteinExistence type="predicted"/>
<accession>Q5UPJ4</accession>
<name>YL115_MIMIV</name>
<keyword id="KW-0067">ATP-binding</keyword>
<keyword id="KW-0347">Helicase</keyword>
<keyword id="KW-0378">Hydrolase</keyword>
<keyword id="KW-0547">Nucleotide-binding</keyword>
<keyword id="KW-1185">Reference proteome</keyword>
<organismHost>
    <name type="scientific">Acanthamoeba polyphaga</name>
    <name type="common">Amoeba</name>
    <dbReference type="NCBI Taxonomy" id="5757"/>
</organismHost>
<reference key="1">
    <citation type="journal article" date="2004" name="Science">
        <title>The 1.2-megabase genome sequence of Mimivirus.</title>
        <authorList>
            <person name="Raoult D."/>
            <person name="Audic S."/>
            <person name="Robert C."/>
            <person name="Abergel C."/>
            <person name="Renesto P."/>
            <person name="Ogata H."/>
            <person name="La Scola B."/>
            <person name="Susan M."/>
            <person name="Claverie J.-M."/>
        </authorList>
    </citation>
    <scope>NUCLEOTIDE SEQUENCE [LARGE SCALE GENOMIC DNA]</scope>
    <source>
        <strain>Rowbotham-Bradford</strain>
    </source>
</reference>
<organism>
    <name type="scientific">Acanthamoeba polyphaga mimivirus</name>
    <name type="common">APMV</name>
    <dbReference type="NCBI Taxonomy" id="212035"/>
    <lineage>
        <taxon>Viruses</taxon>
        <taxon>Varidnaviria</taxon>
        <taxon>Bamfordvirae</taxon>
        <taxon>Nucleocytoviricota</taxon>
        <taxon>Megaviricetes</taxon>
        <taxon>Imitervirales</taxon>
        <taxon>Mimiviridae</taxon>
        <taxon>Megamimivirinae</taxon>
        <taxon>Mimivirus</taxon>
        <taxon>Mimivirus bradfordmassiliense</taxon>
    </lineage>
</organism>
<feature type="chain" id="PRO_0000251134" description="Putative helicase L115">
    <location>
        <begin position="1"/>
        <end position="1246"/>
    </location>
</feature>
<feature type="domain" description="Helicase ATP-binding" evidence="1">
    <location>
        <begin position="872"/>
        <end position="1030"/>
    </location>
</feature>
<feature type="region of interest" description="Disordered" evidence="2">
    <location>
        <begin position="1"/>
        <end position="21"/>
    </location>
</feature>
<feature type="binding site" evidence="1">
    <location>
        <begin position="885"/>
        <end position="892"/>
    </location>
    <ligand>
        <name>ATP</name>
        <dbReference type="ChEBI" id="CHEBI:30616"/>
    </ligand>
</feature>
<dbReference type="EC" id="3.6.4.-"/>
<dbReference type="EMBL" id="AY653733">
    <property type="protein sequence ID" value="AAV50390.1"/>
    <property type="molecule type" value="Genomic_DNA"/>
</dbReference>
<dbReference type="SMR" id="Q5UPJ4"/>
<dbReference type="KEGG" id="vg:9924714"/>
<dbReference type="Proteomes" id="UP000001134">
    <property type="component" value="Genome"/>
</dbReference>
<dbReference type="GO" id="GO:0005524">
    <property type="term" value="F:ATP binding"/>
    <property type="evidence" value="ECO:0007669"/>
    <property type="project" value="UniProtKB-KW"/>
</dbReference>
<dbReference type="GO" id="GO:0003677">
    <property type="term" value="F:DNA binding"/>
    <property type="evidence" value="ECO:0007669"/>
    <property type="project" value="InterPro"/>
</dbReference>
<dbReference type="GO" id="GO:0004386">
    <property type="term" value="F:helicase activity"/>
    <property type="evidence" value="ECO:0007669"/>
    <property type="project" value="UniProtKB-KW"/>
</dbReference>
<dbReference type="GO" id="GO:0016787">
    <property type="term" value="F:hydrolase activity"/>
    <property type="evidence" value="ECO:0007669"/>
    <property type="project" value="UniProtKB-KW"/>
</dbReference>
<dbReference type="Gene3D" id="3.40.50.300">
    <property type="entry name" value="P-loop containing nucleotide triphosphate hydrolases"/>
    <property type="match status" value="1"/>
</dbReference>
<dbReference type="InterPro" id="IPR006935">
    <property type="entry name" value="Helicase/UvrB_N"/>
</dbReference>
<dbReference type="InterPro" id="IPR014001">
    <property type="entry name" value="Helicase_ATP-bd"/>
</dbReference>
<dbReference type="InterPro" id="IPR027417">
    <property type="entry name" value="P-loop_NTPase"/>
</dbReference>
<dbReference type="InterPro" id="IPR050496">
    <property type="entry name" value="SNF2_RAD54_helicase_repair"/>
</dbReference>
<dbReference type="PANTHER" id="PTHR45629:SF7">
    <property type="entry name" value="DNA EXCISION REPAIR PROTEIN ERCC-6-RELATED"/>
    <property type="match status" value="1"/>
</dbReference>
<dbReference type="PANTHER" id="PTHR45629">
    <property type="entry name" value="SNF2/RAD54 FAMILY MEMBER"/>
    <property type="match status" value="1"/>
</dbReference>
<dbReference type="Pfam" id="PF04851">
    <property type="entry name" value="ResIII"/>
    <property type="match status" value="1"/>
</dbReference>
<dbReference type="SMART" id="SM00487">
    <property type="entry name" value="DEXDc"/>
    <property type="match status" value="1"/>
</dbReference>
<dbReference type="SUPFAM" id="SSF52540">
    <property type="entry name" value="P-loop containing nucleoside triphosphate hydrolases"/>
    <property type="match status" value="2"/>
</dbReference>
<dbReference type="PROSITE" id="PS51192">
    <property type="entry name" value="HELICASE_ATP_BIND_1"/>
    <property type="match status" value="1"/>
</dbReference>